<gene>
    <name evidence="1" type="primary">rpoE</name>
    <name type="ordered locus">lin2705</name>
</gene>
<evidence type="ECO:0000255" key="1">
    <source>
        <dbReference type="HAMAP-Rule" id="MF_00357"/>
    </source>
</evidence>
<evidence type="ECO:0000255" key="2">
    <source>
        <dbReference type="PROSITE-ProRule" id="PRU01261"/>
    </source>
</evidence>
<evidence type="ECO:0000256" key="3">
    <source>
        <dbReference type="SAM" id="MobiDB-lite"/>
    </source>
</evidence>
<feature type="chain" id="PRO_0000204315" description="Probable DNA-directed RNA polymerase subunit delta">
    <location>
        <begin position="1"/>
        <end position="178"/>
    </location>
</feature>
<feature type="domain" description="HTH HARE-type" evidence="2">
    <location>
        <begin position="14"/>
        <end position="81"/>
    </location>
</feature>
<feature type="region of interest" description="Disordered" evidence="3">
    <location>
        <begin position="89"/>
        <end position="122"/>
    </location>
</feature>
<feature type="region of interest" description="Disordered" evidence="3">
    <location>
        <begin position="141"/>
        <end position="178"/>
    </location>
</feature>
<feature type="compositionally biased region" description="Acidic residues" evidence="3">
    <location>
        <begin position="105"/>
        <end position="122"/>
    </location>
</feature>
<feature type="compositionally biased region" description="Acidic residues" evidence="3">
    <location>
        <begin position="141"/>
        <end position="150"/>
    </location>
</feature>
<feature type="compositionally biased region" description="Acidic residues" evidence="3">
    <location>
        <begin position="161"/>
        <end position="178"/>
    </location>
</feature>
<protein>
    <recommendedName>
        <fullName evidence="1">Probable DNA-directed RNA polymerase subunit delta</fullName>
    </recommendedName>
    <alternativeName>
        <fullName evidence="1">RNAP delta factor</fullName>
    </alternativeName>
</protein>
<keyword id="KW-0240">DNA-directed RNA polymerase</keyword>
<keyword id="KW-0548">Nucleotidyltransferase</keyword>
<keyword id="KW-0804">Transcription</keyword>
<keyword id="KW-0808">Transferase</keyword>
<reference key="1">
    <citation type="journal article" date="2001" name="Science">
        <title>Comparative genomics of Listeria species.</title>
        <authorList>
            <person name="Glaser P."/>
            <person name="Frangeul L."/>
            <person name="Buchrieser C."/>
            <person name="Rusniok C."/>
            <person name="Amend A."/>
            <person name="Baquero F."/>
            <person name="Berche P."/>
            <person name="Bloecker H."/>
            <person name="Brandt P."/>
            <person name="Chakraborty T."/>
            <person name="Charbit A."/>
            <person name="Chetouani F."/>
            <person name="Couve E."/>
            <person name="de Daruvar A."/>
            <person name="Dehoux P."/>
            <person name="Domann E."/>
            <person name="Dominguez-Bernal G."/>
            <person name="Duchaud E."/>
            <person name="Durant L."/>
            <person name="Dussurget O."/>
            <person name="Entian K.-D."/>
            <person name="Fsihi H."/>
            <person name="Garcia-del Portillo F."/>
            <person name="Garrido P."/>
            <person name="Gautier L."/>
            <person name="Goebel W."/>
            <person name="Gomez-Lopez N."/>
            <person name="Hain T."/>
            <person name="Hauf J."/>
            <person name="Jackson D."/>
            <person name="Jones L.-M."/>
            <person name="Kaerst U."/>
            <person name="Kreft J."/>
            <person name="Kuhn M."/>
            <person name="Kunst F."/>
            <person name="Kurapkat G."/>
            <person name="Madueno E."/>
            <person name="Maitournam A."/>
            <person name="Mata Vicente J."/>
            <person name="Ng E."/>
            <person name="Nedjari H."/>
            <person name="Nordsiek G."/>
            <person name="Novella S."/>
            <person name="de Pablos B."/>
            <person name="Perez-Diaz J.-C."/>
            <person name="Purcell R."/>
            <person name="Remmel B."/>
            <person name="Rose M."/>
            <person name="Schlueter T."/>
            <person name="Simoes N."/>
            <person name="Tierrez A."/>
            <person name="Vazquez-Boland J.-A."/>
            <person name="Voss H."/>
            <person name="Wehland J."/>
            <person name="Cossart P."/>
        </authorList>
    </citation>
    <scope>NUCLEOTIDE SEQUENCE [LARGE SCALE GENOMIC DNA]</scope>
    <source>
        <strain>ATCC BAA-680 / CLIP 11262</strain>
    </source>
</reference>
<name>RPOE_LISIN</name>
<proteinExistence type="inferred from homology"/>
<sequence>MDLKNLTQEERSELSLIDVAHFILEQRKETILFPELVKEIQAFLGLKDAEIRERLVQFYTDMNIDGNFISLGNNTWGLRAWYPMDAIDEEVQTQTTPKKKRKSDDDDDEDEEILDDDVDYDDEEIVEELGEEEISLADVLLDEDEDDDDHLPDGIEGDLATVEDDYTDGDYTEDPEDK</sequence>
<accession>Q927T3</accession>
<organism>
    <name type="scientific">Listeria innocua serovar 6a (strain ATCC BAA-680 / CLIP 11262)</name>
    <dbReference type="NCBI Taxonomy" id="272626"/>
    <lineage>
        <taxon>Bacteria</taxon>
        <taxon>Bacillati</taxon>
        <taxon>Bacillota</taxon>
        <taxon>Bacilli</taxon>
        <taxon>Bacillales</taxon>
        <taxon>Listeriaceae</taxon>
        <taxon>Listeria</taxon>
    </lineage>
</organism>
<comment type="function">
    <text evidence="1">Participates in both the initiation and recycling phases of transcription. In the presence of the delta subunit, RNAP displays an increased specificity of transcription, a decreased affinity for nucleic acids, and an increased efficiency of RNA synthesis because of enhanced recycling.</text>
</comment>
<comment type="subunit">
    <text evidence="1">RNAP is composed of a core of 2 alpha, a beta and a beta' subunits. The core is associated with a delta subunit and one of several sigma factors.</text>
</comment>
<comment type="similarity">
    <text evidence="1">Belongs to the RpoE family.</text>
</comment>
<dbReference type="EMBL" id="AL596173">
    <property type="protein sequence ID" value="CAC97931.1"/>
    <property type="molecule type" value="Genomic_DNA"/>
</dbReference>
<dbReference type="PIR" id="AC1770">
    <property type="entry name" value="AC1770"/>
</dbReference>
<dbReference type="RefSeq" id="WP_003728401.1">
    <property type="nucleotide sequence ID" value="NC_003212.1"/>
</dbReference>
<dbReference type="SMR" id="Q927T3"/>
<dbReference type="STRING" id="272626.gene:17567085"/>
<dbReference type="GeneID" id="93235969"/>
<dbReference type="KEGG" id="lin:lin2705"/>
<dbReference type="eggNOG" id="COG3343">
    <property type="taxonomic scope" value="Bacteria"/>
</dbReference>
<dbReference type="HOGENOM" id="CLU_116648_0_0_9"/>
<dbReference type="OrthoDB" id="401223at2"/>
<dbReference type="Proteomes" id="UP000002513">
    <property type="component" value="Chromosome"/>
</dbReference>
<dbReference type="GO" id="GO:0000428">
    <property type="term" value="C:DNA-directed RNA polymerase complex"/>
    <property type="evidence" value="ECO:0007669"/>
    <property type="project" value="UniProtKB-KW"/>
</dbReference>
<dbReference type="GO" id="GO:0003899">
    <property type="term" value="F:DNA-directed RNA polymerase activity"/>
    <property type="evidence" value="ECO:0007669"/>
    <property type="project" value="UniProtKB-UniRule"/>
</dbReference>
<dbReference type="GO" id="GO:0006351">
    <property type="term" value="P:DNA-templated transcription"/>
    <property type="evidence" value="ECO:0007669"/>
    <property type="project" value="InterPro"/>
</dbReference>
<dbReference type="GO" id="GO:0006355">
    <property type="term" value="P:regulation of DNA-templated transcription"/>
    <property type="evidence" value="ECO:0007669"/>
    <property type="project" value="UniProtKB-UniRule"/>
</dbReference>
<dbReference type="Gene3D" id="1.10.10.1250">
    <property type="entry name" value="RNA polymerase, subunit delta, N-terminal domain"/>
    <property type="match status" value="1"/>
</dbReference>
<dbReference type="HAMAP" id="MF_00357">
    <property type="entry name" value="RNApol_bact_RpoE"/>
    <property type="match status" value="1"/>
</dbReference>
<dbReference type="InterPro" id="IPR007759">
    <property type="entry name" value="Asxl_HARE-HTH"/>
</dbReference>
<dbReference type="InterPro" id="IPR038087">
    <property type="entry name" value="RNAP_delta_N_dom_sf"/>
</dbReference>
<dbReference type="InterPro" id="IPR029757">
    <property type="entry name" value="RpoE"/>
</dbReference>
<dbReference type="NCBIfam" id="TIGR04567">
    <property type="entry name" value="RNAP_delt_lowGC"/>
    <property type="match status" value="1"/>
</dbReference>
<dbReference type="Pfam" id="PF05066">
    <property type="entry name" value="HARE-HTH"/>
    <property type="match status" value="1"/>
</dbReference>
<dbReference type="PROSITE" id="PS51913">
    <property type="entry name" value="HTH_HARE"/>
    <property type="match status" value="1"/>
</dbReference>